<protein>
    <recommendedName>
        <fullName>Catalase HPII</fullName>
        <ecNumber>1.11.1.6</ecNumber>
    </recommendedName>
</protein>
<keyword id="KW-0963">Cytoplasm</keyword>
<keyword id="KW-0349">Heme</keyword>
<keyword id="KW-0376">Hydrogen peroxide</keyword>
<keyword id="KW-0408">Iron</keyword>
<keyword id="KW-0479">Metal-binding</keyword>
<keyword id="KW-0560">Oxidoreductase</keyword>
<keyword id="KW-0575">Peroxidase</keyword>
<keyword id="KW-1185">Reference proteome</keyword>
<comment type="function">
    <text evidence="1">Decomposes hydrogen peroxide into water and oxygen; serves to protect cells from the toxic effects of hydrogen peroxide.</text>
</comment>
<comment type="catalytic activity">
    <reaction evidence="2">
        <text>2 H2O2 = O2 + 2 H2O</text>
        <dbReference type="Rhea" id="RHEA:20309"/>
        <dbReference type="ChEBI" id="CHEBI:15377"/>
        <dbReference type="ChEBI" id="CHEBI:15379"/>
        <dbReference type="ChEBI" id="CHEBI:16240"/>
        <dbReference type="EC" id="1.11.1.6"/>
    </reaction>
</comment>
<comment type="cofactor">
    <cofactor evidence="1">
        <name>heme</name>
        <dbReference type="ChEBI" id="CHEBI:30413"/>
    </cofactor>
</comment>
<comment type="subcellular location">
    <subcellularLocation>
        <location evidence="4">Cytoplasm</location>
    </subcellularLocation>
</comment>
<comment type="similarity">
    <text evidence="4">Belongs to the catalase family. HPII subfamily.</text>
</comment>
<organism>
    <name type="scientific">Pseudomonas aeruginosa (strain ATCC 15692 / DSM 22644 / CIP 104116 / JCM 14847 / LMG 12228 / 1C / PRS 101 / PAO1)</name>
    <dbReference type="NCBI Taxonomy" id="208964"/>
    <lineage>
        <taxon>Bacteria</taxon>
        <taxon>Pseudomonadati</taxon>
        <taxon>Pseudomonadota</taxon>
        <taxon>Gammaproteobacteria</taxon>
        <taxon>Pseudomonadales</taxon>
        <taxon>Pseudomonadaceae</taxon>
        <taxon>Pseudomonas</taxon>
    </lineage>
</organism>
<dbReference type="EC" id="1.11.1.6"/>
<dbReference type="EMBL" id="AE004091">
    <property type="protein sequence ID" value="AAG05535.1"/>
    <property type="molecule type" value="Genomic_DNA"/>
</dbReference>
<dbReference type="PIR" id="B83376">
    <property type="entry name" value="B83376"/>
</dbReference>
<dbReference type="RefSeq" id="NP_250837.1">
    <property type="nucleotide sequence ID" value="NC_002516.2"/>
</dbReference>
<dbReference type="RefSeq" id="WP_003113643.1">
    <property type="nucleotide sequence ID" value="NC_002516.2"/>
</dbReference>
<dbReference type="SMR" id="Q9I1W8"/>
<dbReference type="FunCoup" id="Q9I1W8">
    <property type="interactions" value="578"/>
</dbReference>
<dbReference type="STRING" id="208964.PA2147"/>
<dbReference type="PeroxiBase" id="4089">
    <property type="entry name" value="PaerKat03_PAO1"/>
</dbReference>
<dbReference type="PaxDb" id="208964-PA2147"/>
<dbReference type="GeneID" id="881554"/>
<dbReference type="KEGG" id="pae:PA2147"/>
<dbReference type="PATRIC" id="fig|208964.12.peg.2245"/>
<dbReference type="PseudoCAP" id="PA2147"/>
<dbReference type="HOGENOM" id="CLU_010645_3_0_6"/>
<dbReference type="InParanoid" id="Q9I1W8"/>
<dbReference type="OrthoDB" id="9761719at2"/>
<dbReference type="PhylomeDB" id="Q9I1W8"/>
<dbReference type="BioCyc" id="PAER208964:G1FZ6-2187-MONOMER"/>
<dbReference type="Proteomes" id="UP000002438">
    <property type="component" value="Chromosome"/>
</dbReference>
<dbReference type="GO" id="GO:0005829">
    <property type="term" value="C:cytosol"/>
    <property type="evidence" value="ECO:0000318"/>
    <property type="project" value="GO_Central"/>
</dbReference>
<dbReference type="GO" id="GO:0004096">
    <property type="term" value="F:catalase activity"/>
    <property type="evidence" value="ECO:0000318"/>
    <property type="project" value="GO_Central"/>
</dbReference>
<dbReference type="GO" id="GO:0020037">
    <property type="term" value="F:heme binding"/>
    <property type="evidence" value="ECO:0000318"/>
    <property type="project" value="GO_Central"/>
</dbReference>
<dbReference type="GO" id="GO:0046872">
    <property type="term" value="F:metal ion binding"/>
    <property type="evidence" value="ECO:0007669"/>
    <property type="project" value="UniProtKB-KW"/>
</dbReference>
<dbReference type="GO" id="GO:0042744">
    <property type="term" value="P:hydrogen peroxide catabolic process"/>
    <property type="evidence" value="ECO:0000318"/>
    <property type="project" value="GO_Central"/>
</dbReference>
<dbReference type="GO" id="GO:0006979">
    <property type="term" value="P:response to oxidative stress"/>
    <property type="evidence" value="ECO:0000318"/>
    <property type="project" value="GO_Central"/>
</dbReference>
<dbReference type="CDD" id="cd08155">
    <property type="entry name" value="catalase_clade_2"/>
    <property type="match status" value="1"/>
</dbReference>
<dbReference type="CDD" id="cd03132">
    <property type="entry name" value="GATase1_catalase"/>
    <property type="match status" value="1"/>
</dbReference>
<dbReference type="FunFam" id="2.40.180.10:FF:000003">
    <property type="entry name" value="Catalase"/>
    <property type="match status" value="1"/>
</dbReference>
<dbReference type="FunFam" id="1.20.1370.20:FF:000001">
    <property type="entry name" value="Catalase HPII"/>
    <property type="match status" value="1"/>
</dbReference>
<dbReference type="Gene3D" id="1.20.1370.20">
    <property type="match status" value="1"/>
</dbReference>
<dbReference type="Gene3D" id="3.40.50.880">
    <property type="match status" value="1"/>
</dbReference>
<dbReference type="Gene3D" id="2.40.180.10">
    <property type="entry name" value="Catalase core domain"/>
    <property type="match status" value="1"/>
</dbReference>
<dbReference type="InterPro" id="IPR018028">
    <property type="entry name" value="Catalase"/>
</dbReference>
<dbReference type="InterPro" id="IPR024708">
    <property type="entry name" value="Catalase_AS"/>
</dbReference>
<dbReference type="InterPro" id="IPR024712">
    <property type="entry name" value="Catalase_clade2"/>
</dbReference>
<dbReference type="InterPro" id="IPR043156">
    <property type="entry name" value="Catalase_clade2_helical"/>
</dbReference>
<dbReference type="InterPro" id="IPR011614">
    <property type="entry name" value="Catalase_core"/>
</dbReference>
<dbReference type="InterPro" id="IPR002226">
    <property type="entry name" value="Catalase_haem_BS"/>
</dbReference>
<dbReference type="InterPro" id="IPR010582">
    <property type="entry name" value="Catalase_immune_responsive"/>
</dbReference>
<dbReference type="InterPro" id="IPR041399">
    <property type="entry name" value="Catalase_large_C"/>
</dbReference>
<dbReference type="InterPro" id="IPR020835">
    <property type="entry name" value="Catalase_sf"/>
</dbReference>
<dbReference type="InterPro" id="IPR029062">
    <property type="entry name" value="Class_I_gatase-like"/>
</dbReference>
<dbReference type="NCBIfam" id="NF008422">
    <property type="entry name" value="PRK11249.1"/>
    <property type="match status" value="1"/>
</dbReference>
<dbReference type="PANTHER" id="PTHR42821">
    <property type="entry name" value="CATALASE"/>
    <property type="match status" value="1"/>
</dbReference>
<dbReference type="PANTHER" id="PTHR42821:SF1">
    <property type="entry name" value="CATALASE-B"/>
    <property type="match status" value="1"/>
</dbReference>
<dbReference type="Pfam" id="PF00199">
    <property type="entry name" value="Catalase"/>
    <property type="match status" value="1"/>
</dbReference>
<dbReference type="Pfam" id="PF06628">
    <property type="entry name" value="Catalase-rel"/>
    <property type="match status" value="1"/>
</dbReference>
<dbReference type="Pfam" id="PF18011">
    <property type="entry name" value="Catalase_C"/>
    <property type="match status" value="1"/>
</dbReference>
<dbReference type="PIRSF" id="PIRSF038927">
    <property type="entry name" value="Catalase_clade2"/>
    <property type="match status" value="1"/>
</dbReference>
<dbReference type="PRINTS" id="PR00067">
    <property type="entry name" value="CATALASE"/>
</dbReference>
<dbReference type="SMART" id="SM01060">
    <property type="entry name" value="Catalase"/>
    <property type="match status" value="1"/>
</dbReference>
<dbReference type="SUPFAM" id="SSF52317">
    <property type="entry name" value="Class I glutamine amidotransferase-like"/>
    <property type="match status" value="1"/>
</dbReference>
<dbReference type="SUPFAM" id="SSF56634">
    <property type="entry name" value="Heme-dependent catalase-like"/>
    <property type="match status" value="1"/>
</dbReference>
<dbReference type="PROSITE" id="PS00437">
    <property type="entry name" value="CATALASE_1"/>
    <property type="match status" value="1"/>
</dbReference>
<dbReference type="PROSITE" id="PS00438">
    <property type="entry name" value="CATALASE_2"/>
    <property type="match status" value="1"/>
</dbReference>
<dbReference type="PROSITE" id="PS51402">
    <property type="entry name" value="CATALASE_3"/>
    <property type="match status" value="1"/>
</dbReference>
<feature type="chain" id="PRO_0000287752" description="Catalase HPII">
    <location>
        <begin position="1"/>
        <end position="709"/>
    </location>
</feature>
<feature type="region of interest" description="Disordered" evidence="3">
    <location>
        <begin position="1"/>
        <end position="32"/>
    </location>
</feature>
<feature type="region of interest" description="Disordered" evidence="3">
    <location>
        <begin position="419"/>
        <end position="443"/>
    </location>
</feature>
<feature type="compositionally biased region" description="Polar residues" evidence="3">
    <location>
        <begin position="1"/>
        <end position="26"/>
    </location>
</feature>
<feature type="active site" evidence="2">
    <location>
        <position position="90"/>
    </location>
</feature>
<feature type="active site" evidence="2">
    <location>
        <position position="163"/>
    </location>
</feature>
<feature type="binding site" description="axial binding residue" evidence="1">
    <location>
        <position position="377"/>
    </location>
    <ligand>
        <name>heme</name>
        <dbReference type="ChEBI" id="CHEBI:30413"/>
    </ligand>
    <ligandPart>
        <name>Fe</name>
        <dbReference type="ChEBI" id="CHEBI:18248"/>
    </ligandPart>
</feature>
<accession>Q9I1W8</accession>
<name>CATE_PSEAE</name>
<proteinExistence type="inferred from homology"/>
<gene>
    <name type="primary">katE</name>
    <name type="ordered locus">PA2147</name>
</gene>
<reference key="1">
    <citation type="journal article" date="2000" name="Nature">
        <title>Complete genome sequence of Pseudomonas aeruginosa PAO1, an opportunistic pathogen.</title>
        <authorList>
            <person name="Stover C.K."/>
            <person name="Pham X.-Q.T."/>
            <person name="Erwin A.L."/>
            <person name="Mizoguchi S.D."/>
            <person name="Warrener P."/>
            <person name="Hickey M.J."/>
            <person name="Brinkman F.S.L."/>
            <person name="Hufnagle W.O."/>
            <person name="Kowalik D.J."/>
            <person name="Lagrou M."/>
            <person name="Garber R.L."/>
            <person name="Goltry L."/>
            <person name="Tolentino E."/>
            <person name="Westbrock-Wadman S."/>
            <person name="Yuan Y."/>
            <person name="Brody L.L."/>
            <person name="Coulter S.N."/>
            <person name="Folger K.R."/>
            <person name="Kas A."/>
            <person name="Larbig K."/>
            <person name="Lim R.M."/>
            <person name="Smith K.A."/>
            <person name="Spencer D.H."/>
            <person name="Wong G.K.-S."/>
            <person name="Wu Z."/>
            <person name="Paulsen I.T."/>
            <person name="Reizer J."/>
            <person name="Saier M.H. Jr."/>
            <person name="Hancock R.E.W."/>
            <person name="Lory S."/>
            <person name="Olson M.V."/>
        </authorList>
    </citation>
    <scope>NUCLEOTIDE SEQUENCE [LARGE SCALE GENOMIC DNA]</scope>
    <source>
        <strain>ATCC 15692 / DSM 22644 / CIP 104116 / JCM 14847 / LMG 12228 / 1C / PRS 101 / PAO1</strain>
    </source>
</reference>
<sequence>MSEQNNEQRSQAAGTDTVDRGNSNAKLEQLEAYREDATGEALSTNTGTRIADNQNTLKAGERGPSLLEDFIMREKITHFDHERIPERVVHARGSAAHGYFEAYEDLSDLTKAGFLAEAGKRTPVFVRFSTVQGPRGSADTVRDVRGFAVKFYTDEGNFDLVGNNMPVFFIQDAIKFPDFVHAVKPEPHNEIPTGASAHDTFWDFVSLTPESAHMVMWLMSDRAIPIAYRNMQGFGVHTFRLVNAAGESVLVKFHWRPKSGTCSLVWDEAQKLAGKDPDFNRRTLWEDIEKGDYPEWELGLQVIPENQQDSFDFDLLDPTKLVPEELVPVRVVGRMVLNRNPDNFFAETEQVAFHVGHVVPGIDFTNDPLLQGRLFSYTDTQLLRLSGPNFNEIPINRPLCPFHNNQRDAPHRQTINRGRASYEPNSIDGGWPKETPPAARNGGFSTYHEPVSGSKLRKRADSFADHFSQAALFWHSMSEAEQAHIVAAYSFELSKVERQSIREREVNQILLNIDPQLAARVAANVGVQLAAPANPTPQPKPSPALSQMNLLSGDIRSRKVAILIADGVAESDVSDLRDALRQEGADAKLIAPSASPVQAENGAELSPEGTWDGLPSVAFDAVFVPGGAASSQAIGADGRGLHYLLEAYKHLKPVAFAGDAQALASQLSLPGDPGVVLGATATDVFPGLRQALMQHRIWQREAATKAIPA</sequence>
<evidence type="ECO:0000250" key="1"/>
<evidence type="ECO:0000255" key="2">
    <source>
        <dbReference type="PROSITE-ProRule" id="PRU10013"/>
    </source>
</evidence>
<evidence type="ECO:0000256" key="3">
    <source>
        <dbReference type="SAM" id="MobiDB-lite"/>
    </source>
</evidence>
<evidence type="ECO:0000305" key="4"/>